<evidence type="ECO:0000250" key="1">
    <source>
        <dbReference type="UniProtKB" id="D4ACE5"/>
    </source>
</evidence>
<evidence type="ECO:0000250" key="2">
    <source>
        <dbReference type="UniProtKB" id="Q059U7"/>
    </source>
</evidence>
<evidence type="ECO:0000250" key="3">
    <source>
        <dbReference type="UniProtKB" id="Q2I0E5"/>
    </source>
</evidence>
<evidence type="ECO:0000255" key="4">
    <source>
        <dbReference type="PROSITE-ProRule" id="PRU00143"/>
    </source>
</evidence>
<evidence type="ECO:0000256" key="5">
    <source>
        <dbReference type="SAM" id="MobiDB-lite"/>
    </source>
</evidence>
<evidence type="ECO:0000269" key="6">
    <source>
    </source>
</evidence>
<evidence type="ECO:0000269" key="7">
    <source>
    </source>
</evidence>
<evidence type="ECO:0000269" key="8">
    <source>
    </source>
</evidence>
<evidence type="ECO:0000303" key="9">
    <source>
    </source>
</evidence>
<evidence type="ECO:0000305" key="10"/>
<evidence type="ECO:0000305" key="11">
    <source>
    </source>
</evidence>
<evidence type="ECO:0007744" key="12">
    <source>
        <dbReference type="PDB" id="7Q3D"/>
    </source>
</evidence>
<evidence type="ECO:0007744" key="13">
    <source>
    </source>
</evidence>
<evidence type="ECO:0007829" key="14">
    <source>
        <dbReference type="PDB" id="7Q3D"/>
    </source>
</evidence>
<accession>Q9ULD6</accession>
<accession>A1L4N5</accession>
<accession>D6RAE6</accession>
<accession>D6RBT4</accession>
<accession>Q4W5I8</accession>
<accession>Q86V55</accession>
<reference key="1">
    <citation type="journal article" date="1999" name="DNA Res.">
        <title>Prediction of the coding sequences of unidentified human genes. XV. The complete sequences of 100 new cDNA clones from brain which code for large proteins in vitro.</title>
        <authorList>
            <person name="Nagase T."/>
            <person name="Ishikawa K."/>
            <person name="Kikuno R."/>
            <person name="Hirosawa M."/>
            <person name="Nomura N."/>
            <person name="Ohara O."/>
        </authorList>
    </citation>
    <scope>NUCLEOTIDE SEQUENCE [LARGE SCALE MRNA] (ISOFORM 1)</scope>
    <source>
        <tissue>Brain</tissue>
    </source>
</reference>
<reference key="2">
    <citation type="journal article" date="2002" name="DNA Res.">
        <title>Construction of expression-ready cDNA clones for KIAA genes: manual curation of 330 KIAA cDNA clones.</title>
        <authorList>
            <person name="Nakajima D."/>
            <person name="Okazaki N."/>
            <person name="Yamakawa H."/>
            <person name="Kikuno R."/>
            <person name="Ohara O."/>
            <person name="Nagase T."/>
        </authorList>
    </citation>
    <scope>SEQUENCE REVISION</scope>
</reference>
<reference key="3">
    <citation type="journal article" date="2004" name="Nat. Genet.">
        <title>Complete sequencing and characterization of 21,243 full-length human cDNAs.</title>
        <authorList>
            <person name="Ota T."/>
            <person name="Suzuki Y."/>
            <person name="Nishikawa T."/>
            <person name="Otsuki T."/>
            <person name="Sugiyama T."/>
            <person name="Irie R."/>
            <person name="Wakamatsu A."/>
            <person name="Hayashi K."/>
            <person name="Sato H."/>
            <person name="Nagai K."/>
            <person name="Kimura K."/>
            <person name="Makita H."/>
            <person name="Sekine M."/>
            <person name="Obayashi M."/>
            <person name="Nishi T."/>
            <person name="Shibahara T."/>
            <person name="Tanaka T."/>
            <person name="Ishii S."/>
            <person name="Yamamoto J."/>
            <person name="Saito K."/>
            <person name="Kawai Y."/>
            <person name="Isono Y."/>
            <person name="Nakamura Y."/>
            <person name="Nagahari K."/>
            <person name="Murakami K."/>
            <person name="Yasuda T."/>
            <person name="Iwayanagi T."/>
            <person name="Wagatsuma M."/>
            <person name="Shiratori A."/>
            <person name="Sudo H."/>
            <person name="Hosoiri T."/>
            <person name="Kaku Y."/>
            <person name="Kodaira H."/>
            <person name="Kondo H."/>
            <person name="Sugawara M."/>
            <person name="Takahashi M."/>
            <person name="Kanda K."/>
            <person name="Yokoi T."/>
            <person name="Furuya T."/>
            <person name="Kikkawa E."/>
            <person name="Omura Y."/>
            <person name="Abe K."/>
            <person name="Kamihara K."/>
            <person name="Katsuta N."/>
            <person name="Sato K."/>
            <person name="Tanikawa M."/>
            <person name="Yamazaki M."/>
            <person name="Ninomiya K."/>
            <person name="Ishibashi T."/>
            <person name="Yamashita H."/>
            <person name="Murakawa K."/>
            <person name="Fujimori K."/>
            <person name="Tanai H."/>
            <person name="Kimata M."/>
            <person name="Watanabe M."/>
            <person name="Hiraoka S."/>
            <person name="Chiba Y."/>
            <person name="Ishida S."/>
            <person name="Ono Y."/>
            <person name="Takiguchi S."/>
            <person name="Watanabe S."/>
            <person name="Yosida M."/>
            <person name="Hotuta T."/>
            <person name="Kusano J."/>
            <person name="Kanehori K."/>
            <person name="Takahashi-Fujii A."/>
            <person name="Hara H."/>
            <person name="Tanase T.-O."/>
            <person name="Nomura Y."/>
            <person name="Togiya S."/>
            <person name="Komai F."/>
            <person name="Hara R."/>
            <person name="Takeuchi K."/>
            <person name="Arita M."/>
            <person name="Imose N."/>
            <person name="Musashino K."/>
            <person name="Yuuki H."/>
            <person name="Oshima A."/>
            <person name="Sasaki N."/>
            <person name="Aotsuka S."/>
            <person name="Yoshikawa Y."/>
            <person name="Matsunawa H."/>
            <person name="Ichihara T."/>
            <person name="Shiohata N."/>
            <person name="Sano S."/>
            <person name="Moriya S."/>
            <person name="Momiyama H."/>
            <person name="Satoh N."/>
            <person name="Takami S."/>
            <person name="Terashima Y."/>
            <person name="Suzuki O."/>
            <person name="Nakagawa S."/>
            <person name="Senoh A."/>
            <person name="Mizoguchi H."/>
            <person name="Goto Y."/>
            <person name="Shimizu F."/>
            <person name="Wakebe H."/>
            <person name="Hishigaki H."/>
            <person name="Watanabe T."/>
            <person name="Sugiyama A."/>
            <person name="Takemoto M."/>
            <person name="Kawakami B."/>
            <person name="Yamazaki M."/>
            <person name="Watanabe K."/>
            <person name="Kumagai A."/>
            <person name="Itakura S."/>
            <person name="Fukuzumi Y."/>
            <person name="Fujimori Y."/>
            <person name="Komiyama M."/>
            <person name="Tashiro H."/>
            <person name="Tanigami A."/>
            <person name="Fujiwara T."/>
            <person name="Ono T."/>
            <person name="Yamada K."/>
            <person name="Fujii Y."/>
            <person name="Ozaki K."/>
            <person name="Hirao M."/>
            <person name="Ohmori Y."/>
            <person name="Kawabata A."/>
            <person name="Hikiji T."/>
            <person name="Kobatake N."/>
            <person name="Inagaki H."/>
            <person name="Ikema Y."/>
            <person name="Okamoto S."/>
            <person name="Okitani R."/>
            <person name="Kawakami T."/>
            <person name="Noguchi S."/>
            <person name="Itoh T."/>
            <person name="Shigeta K."/>
            <person name="Senba T."/>
            <person name="Matsumura K."/>
            <person name="Nakajima Y."/>
            <person name="Mizuno T."/>
            <person name="Morinaga M."/>
            <person name="Sasaki M."/>
            <person name="Togashi T."/>
            <person name="Oyama M."/>
            <person name="Hata H."/>
            <person name="Watanabe M."/>
            <person name="Komatsu T."/>
            <person name="Mizushima-Sugano J."/>
            <person name="Satoh T."/>
            <person name="Shirai Y."/>
            <person name="Takahashi Y."/>
            <person name="Nakagawa K."/>
            <person name="Okumura K."/>
            <person name="Nagase T."/>
            <person name="Nomura N."/>
            <person name="Kikuchi H."/>
            <person name="Masuho Y."/>
            <person name="Yamashita R."/>
            <person name="Nakai K."/>
            <person name="Yada T."/>
            <person name="Nakamura Y."/>
            <person name="Ohara O."/>
            <person name="Isogai T."/>
            <person name="Sugano S."/>
        </authorList>
    </citation>
    <scope>NUCLEOTIDE SEQUENCE [LARGE SCALE MRNA] (ISOFORM 1)</scope>
    <source>
        <tissue>Fetal brain</tissue>
    </source>
</reference>
<reference key="4">
    <citation type="journal article" date="2005" name="Nature">
        <title>Generation and annotation of the DNA sequences of human chromosomes 2 and 4.</title>
        <authorList>
            <person name="Hillier L.W."/>
            <person name="Graves T.A."/>
            <person name="Fulton R.S."/>
            <person name="Fulton L.A."/>
            <person name="Pepin K.H."/>
            <person name="Minx P."/>
            <person name="Wagner-McPherson C."/>
            <person name="Layman D."/>
            <person name="Wylie K."/>
            <person name="Sekhon M."/>
            <person name="Becker M.C."/>
            <person name="Fewell G.A."/>
            <person name="Delehaunty K.D."/>
            <person name="Miner T.L."/>
            <person name="Nash W.E."/>
            <person name="Kremitzki C."/>
            <person name="Oddy L."/>
            <person name="Du H."/>
            <person name="Sun H."/>
            <person name="Bradshaw-Cordum H."/>
            <person name="Ali J."/>
            <person name="Carter J."/>
            <person name="Cordes M."/>
            <person name="Harris A."/>
            <person name="Isak A."/>
            <person name="van Brunt A."/>
            <person name="Nguyen C."/>
            <person name="Du F."/>
            <person name="Courtney L."/>
            <person name="Kalicki J."/>
            <person name="Ozersky P."/>
            <person name="Abbott S."/>
            <person name="Armstrong J."/>
            <person name="Belter E.A."/>
            <person name="Caruso L."/>
            <person name="Cedroni M."/>
            <person name="Cotton M."/>
            <person name="Davidson T."/>
            <person name="Desai A."/>
            <person name="Elliott G."/>
            <person name="Erb T."/>
            <person name="Fronick C."/>
            <person name="Gaige T."/>
            <person name="Haakenson W."/>
            <person name="Haglund K."/>
            <person name="Holmes A."/>
            <person name="Harkins R."/>
            <person name="Kim K."/>
            <person name="Kruchowski S.S."/>
            <person name="Strong C.M."/>
            <person name="Grewal N."/>
            <person name="Goyea E."/>
            <person name="Hou S."/>
            <person name="Levy A."/>
            <person name="Martinka S."/>
            <person name="Mead K."/>
            <person name="McLellan M.D."/>
            <person name="Meyer R."/>
            <person name="Randall-Maher J."/>
            <person name="Tomlinson C."/>
            <person name="Dauphin-Kohlberg S."/>
            <person name="Kozlowicz-Reilly A."/>
            <person name="Shah N."/>
            <person name="Swearengen-Shahid S."/>
            <person name="Snider J."/>
            <person name="Strong J.T."/>
            <person name="Thompson J."/>
            <person name="Yoakum M."/>
            <person name="Leonard S."/>
            <person name="Pearman C."/>
            <person name="Trani L."/>
            <person name="Radionenko M."/>
            <person name="Waligorski J.E."/>
            <person name="Wang C."/>
            <person name="Rock S.M."/>
            <person name="Tin-Wollam A.-M."/>
            <person name="Maupin R."/>
            <person name="Latreille P."/>
            <person name="Wendl M.C."/>
            <person name="Yang S.-P."/>
            <person name="Pohl C."/>
            <person name="Wallis J.W."/>
            <person name="Spieth J."/>
            <person name="Bieri T.A."/>
            <person name="Berkowicz N."/>
            <person name="Nelson J.O."/>
            <person name="Osborne J."/>
            <person name="Ding L."/>
            <person name="Meyer R."/>
            <person name="Sabo A."/>
            <person name="Shotland Y."/>
            <person name="Sinha P."/>
            <person name="Wohldmann P.E."/>
            <person name="Cook L.L."/>
            <person name="Hickenbotham M.T."/>
            <person name="Eldred J."/>
            <person name="Williams D."/>
            <person name="Jones T.A."/>
            <person name="She X."/>
            <person name="Ciccarelli F.D."/>
            <person name="Izaurralde E."/>
            <person name="Taylor J."/>
            <person name="Schmutz J."/>
            <person name="Myers R.M."/>
            <person name="Cox D.R."/>
            <person name="Huang X."/>
            <person name="McPherson J.D."/>
            <person name="Mardis E.R."/>
            <person name="Clifton S.W."/>
            <person name="Warren W.C."/>
            <person name="Chinwalla A.T."/>
            <person name="Eddy S.R."/>
            <person name="Marra M.A."/>
            <person name="Ovcharenko I."/>
            <person name="Furey T.S."/>
            <person name="Miller W."/>
            <person name="Eichler E.E."/>
            <person name="Bork P."/>
            <person name="Suyama M."/>
            <person name="Torrents D."/>
            <person name="Waterston R.H."/>
            <person name="Wilson R.K."/>
        </authorList>
    </citation>
    <scope>NUCLEOTIDE SEQUENCE [LARGE SCALE GENOMIC DNA]</scope>
</reference>
<reference key="5">
    <citation type="submission" date="2005-09" db="EMBL/GenBank/DDBJ databases">
        <authorList>
            <person name="Mural R.J."/>
            <person name="Istrail S."/>
            <person name="Sutton G.G."/>
            <person name="Florea L."/>
            <person name="Halpern A.L."/>
            <person name="Mobarry C.M."/>
            <person name="Lippert R."/>
            <person name="Walenz B."/>
            <person name="Shatkay H."/>
            <person name="Dew I."/>
            <person name="Miller J.R."/>
            <person name="Flanigan M.J."/>
            <person name="Edwards N.J."/>
            <person name="Bolanos R."/>
            <person name="Fasulo D."/>
            <person name="Halldorsson B.V."/>
            <person name="Hannenhalli S."/>
            <person name="Turner R."/>
            <person name="Yooseph S."/>
            <person name="Lu F."/>
            <person name="Nusskern D.R."/>
            <person name="Shue B.C."/>
            <person name="Zheng X.H."/>
            <person name="Zhong F."/>
            <person name="Delcher A.L."/>
            <person name="Huson D.H."/>
            <person name="Kravitz S.A."/>
            <person name="Mouchard L."/>
            <person name="Reinert K."/>
            <person name="Remington K.A."/>
            <person name="Clark A.G."/>
            <person name="Waterman M.S."/>
            <person name="Eichler E.E."/>
            <person name="Adams M.D."/>
            <person name="Hunkapiller M.W."/>
            <person name="Myers E.W."/>
            <person name="Venter J.C."/>
        </authorList>
    </citation>
    <scope>NUCLEOTIDE SEQUENCE [LARGE SCALE GENOMIC DNA]</scope>
</reference>
<reference key="6">
    <citation type="journal article" date="2004" name="Genome Res.">
        <title>The status, quality, and expansion of the NIH full-length cDNA project: the Mammalian Gene Collection (MGC).</title>
        <authorList>
            <consortium name="The MGC Project Team"/>
        </authorList>
    </citation>
    <scope>NUCLEOTIDE SEQUENCE [LARGE SCALE MRNA] (ISOFORMS 1 AND 2)</scope>
    <source>
        <tissue>Hippocampus</tissue>
    </source>
</reference>
<reference key="7">
    <citation type="journal article" date="2013" name="J. Proteome Res.">
        <title>Toward a comprehensive characterization of a human cancer cell phosphoproteome.</title>
        <authorList>
            <person name="Zhou H."/>
            <person name="Di Palma S."/>
            <person name="Preisinger C."/>
            <person name="Peng M."/>
            <person name="Polat A.N."/>
            <person name="Heck A.J."/>
            <person name="Mohammed S."/>
        </authorList>
    </citation>
    <scope>PHOSPHORYLATION [LARGE SCALE ANALYSIS] AT SER-674</scope>
    <scope>IDENTIFICATION BY MASS SPECTROMETRY [LARGE SCALE ANALYSIS]</scope>
    <source>
        <tissue>Erythroleukemia</tissue>
    </source>
</reference>
<reference key="8">
    <citation type="journal article" date="2015" name="J. Cell Biol.">
        <title>The polarity protein Inturned links NPHP4 to Daam1 to control the subapical actin network in multiciliated cells.</title>
        <authorList>
            <person name="Yasunaga T."/>
            <person name="Hoff S."/>
            <person name="Schell C."/>
            <person name="Helmstaedter M."/>
            <person name="Kretz O."/>
            <person name="Kuechlin S."/>
            <person name="Yakulov T.A."/>
            <person name="Engel C."/>
            <person name="Mueller B."/>
            <person name="Bensch R."/>
            <person name="Ronneberger O."/>
            <person name="Huber T.B."/>
            <person name="Lienkamp S.S."/>
            <person name="Walz G."/>
        </authorList>
    </citation>
    <scope>INTERACTION WITH NPHP4 AND DAAM1</scope>
    <scope>SUBCELLULAR LOCATION</scope>
</reference>
<reference evidence="12" key="9">
    <citation type="journal article" date="2022" name="Sci. Adv.">
        <title>Structure of the ciliogenesis-associated CPLANE complex.</title>
        <authorList>
            <person name="Langousis G."/>
            <person name="Cavadini S."/>
            <person name="Boegholm N."/>
            <person name="Lorentzen E."/>
            <person name="Kempf G."/>
            <person name="Matthias P."/>
        </authorList>
    </citation>
    <scope>STRUCTURE BY ELECTRON MICROSCOPY (3.35 ANGSTROMS) OF 2-942</scope>
    <scope>IDENTIFICATION IN THE CPLANE COMPLEX</scope>
    <scope>CHARACTERIZATION OF VARIANT THR-452</scope>
    <scope>CHARACTERIZATION OF VARIANT SRTD20 ALA-500</scope>
</reference>
<reference key="10">
    <citation type="journal article" date="2016" name="Nat. Genet.">
        <title>The ciliopathy-associated CPLANE proteins direct basal body recruitment of intraflagellar transport machinery.</title>
        <authorList>
            <person name="Toriyama M."/>
            <person name="Lee C."/>
            <person name="Taylor S.P."/>
            <person name="Duran I."/>
            <person name="Cohn D.H."/>
            <person name="Bruel A.L."/>
            <person name="Tabler J.M."/>
            <person name="Drew K."/>
            <person name="Kelly M.R."/>
            <person name="Kim S."/>
            <person name="Park T.J."/>
            <person name="Braun D.A."/>
            <person name="Pierquin G."/>
            <person name="Biver A."/>
            <person name="Wagner K."/>
            <person name="Malfroot A."/>
            <person name="Panigrahi I."/>
            <person name="Franco B."/>
            <person name="Al-Lami H.A."/>
            <person name="Yeung Y."/>
            <person name="Choi Y.J."/>
            <person name="Duffourd Y."/>
            <person name="Faivre L."/>
            <person name="Riviere J.B."/>
            <person name="Chen J."/>
            <person name="Liu K.J."/>
            <person name="Marcotte E.M."/>
            <person name="Hildebrandt F."/>
            <person name="Thauvin-Robinet C."/>
            <person name="Krakow D."/>
            <person name="Jackson P.K."/>
            <person name="Wallingford J.B."/>
        </authorList>
    </citation>
    <scope>INVOLVEMENT IN OFD17; SRTD7/20 AND SRTD20</scope>
    <scope>FUNCTION</scope>
    <scope>INTERACTION WITH CPLANE1</scope>
    <scope>VARIANT THR-452</scope>
    <scope>VARIANTS SRTD20 355-GLU--LEU-942 DEL AND ALA-500</scope>
    <scope>VARIANT SRTD7/20 276-GLN--LEU-942 DEL</scope>
    <scope>CHARACTERIZATION OF VARIANTS SRTD20 355-GLU--LEU-942 DEL AND ALA-500</scope>
</reference>
<dbReference type="EMBL" id="AB033110">
    <property type="protein sequence ID" value="BAA86598.1"/>
    <property type="status" value="ALT_INIT"/>
    <property type="molecule type" value="mRNA"/>
</dbReference>
<dbReference type="EMBL" id="AK291481">
    <property type="protein sequence ID" value="BAF84170.1"/>
    <property type="molecule type" value="mRNA"/>
</dbReference>
<dbReference type="EMBL" id="AC093591">
    <property type="status" value="NOT_ANNOTATED_CDS"/>
    <property type="molecule type" value="Genomic_DNA"/>
</dbReference>
<dbReference type="EMBL" id="AC097462">
    <property type="protein sequence ID" value="AAY41002.1"/>
    <property type="molecule type" value="Genomic_DNA"/>
</dbReference>
<dbReference type="EMBL" id="AC110797">
    <property type="status" value="NOT_ANNOTATED_CDS"/>
    <property type="molecule type" value="Genomic_DNA"/>
</dbReference>
<dbReference type="EMBL" id="CH471056">
    <property type="protein sequence ID" value="EAX05202.1"/>
    <property type="molecule type" value="Genomic_DNA"/>
</dbReference>
<dbReference type="EMBL" id="BC051698">
    <property type="protein sequence ID" value="AAH51698.1"/>
    <property type="molecule type" value="mRNA"/>
</dbReference>
<dbReference type="EMBL" id="BC130611">
    <property type="protein sequence ID" value="AAI30612.1"/>
    <property type="molecule type" value="mRNA"/>
</dbReference>
<dbReference type="CCDS" id="CCDS34061.1">
    <molecule id="Q9ULD6-1"/>
</dbReference>
<dbReference type="RefSeq" id="NP_056508.2">
    <molecule id="Q9ULD6-1"/>
    <property type="nucleotide sequence ID" value="NM_015693.3"/>
</dbReference>
<dbReference type="RefSeq" id="XP_011530148.1">
    <property type="nucleotide sequence ID" value="XM_011531846.1"/>
</dbReference>
<dbReference type="PDB" id="7Q3D">
    <property type="method" value="EM"/>
    <property type="resolution" value="3.35 A"/>
    <property type="chains" value="B=2-942"/>
</dbReference>
<dbReference type="PDBsum" id="7Q3D"/>
<dbReference type="EMDB" id="EMD-13789"/>
<dbReference type="SMR" id="Q9ULD6"/>
<dbReference type="BioGRID" id="118034">
    <property type="interactions" value="50"/>
</dbReference>
<dbReference type="ComplexPortal" id="CPX-5001">
    <property type="entry name" value="CPLANE complex"/>
</dbReference>
<dbReference type="CORUM" id="Q9ULD6"/>
<dbReference type="FunCoup" id="Q9ULD6">
    <property type="interactions" value="341"/>
</dbReference>
<dbReference type="IntAct" id="Q9ULD6">
    <property type="interactions" value="47"/>
</dbReference>
<dbReference type="MINT" id="Q9ULD6"/>
<dbReference type="STRING" id="9606.ENSP00000334003"/>
<dbReference type="GlyGen" id="Q9ULD6">
    <property type="glycosylation" value="2 sites, 1 O-linked glycan (2 sites)"/>
</dbReference>
<dbReference type="iPTMnet" id="Q9ULD6"/>
<dbReference type="PhosphoSitePlus" id="Q9ULD6"/>
<dbReference type="BioMuta" id="INTU"/>
<dbReference type="DMDM" id="73621379"/>
<dbReference type="jPOST" id="Q9ULD6"/>
<dbReference type="MassIVE" id="Q9ULD6"/>
<dbReference type="PaxDb" id="9606-ENSP00000334003"/>
<dbReference type="PeptideAtlas" id="Q9ULD6"/>
<dbReference type="ProteomicsDB" id="84999">
    <molecule id="Q9ULD6-1"/>
</dbReference>
<dbReference type="ProteomicsDB" id="85000">
    <molecule id="Q9ULD6-2"/>
</dbReference>
<dbReference type="ProteomicsDB" id="85001">
    <molecule id="Q9ULD6-3"/>
</dbReference>
<dbReference type="ProteomicsDB" id="85002">
    <molecule id="Q9ULD6-4"/>
</dbReference>
<dbReference type="Antibodypedia" id="26899">
    <property type="antibodies" value="74 antibodies from 16 providers"/>
</dbReference>
<dbReference type="DNASU" id="27152"/>
<dbReference type="Ensembl" id="ENST00000335251.11">
    <molecule id="Q9ULD6-1"/>
    <property type="protein sequence ID" value="ENSP00000334003.5"/>
    <property type="gene ID" value="ENSG00000164066.13"/>
</dbReference>
<dbReference type="Ensembl" id="ENST00000503626.5">
    <molecule id="Q9ULD6-2"/>
    <property type="protein sequence ID" value="ENSP00000426287.1"/>
    <property type="gene ID" value="ENSG00000164066.13"/>
</dbReference>
<dbReference type="Ensembl" id="ENST00000503952.5">
    <molecule id="Q9ULD6-3"/>
    <property type="protein sequence ID" value="ENSP00000421995.1"/>
    <property type="gene ID" value="ENSG00000164066.13"/>
</dbReference>
<dbReference type="GeneID" id="27152"/>
<dbReference type="KEGG" id="hsa:27152"/>
<dbReference type="MANE-Select" id="ENST00000335251.11">
    <property type="protein sequence ID" value="ENSP00000334003.5"/>
    <property type="RefSeq nucleotide sequence ID" value="NM_015693.4"/>
    <property type="RefSeq protein sequence ID" value="NP_056508.2"/>
</dbReference>
<dbReference type="UCSC" id="uc003ifk.3">
    <molecule id="Q9ULD6-1"/>
    <property type="organism name" value="human"/>
</dbReference>
<dbReference type="AGR" id="HGNC:29239"/>
<dbReference type="CTD" id="27152"/>
<dbReference type="DisGeNET" id="27152"/>
<dbReference type="GeneCards" id="INTU"/>
<dbReference type="HGNC" id="HGNC:29239">
    <property type="gene designation" value="INTU"/>
</dbReference>
<dbReference type="HPA" id="ENSG00000164066">
    <property type="expression patterns" value="Tissue enhanced (retina)"/>
</dbReference>
<dbReference type="MalaCards" id="INTU"/>
<dbReference type="MIM" id="610621">
    <property type="type" value="gene"/>
</dbReference>
<dbReference type="MIM" id="614091">
    <property type="type" value="phenotype"/>
</dbReference>
<dbReference type="MIM" id="617925">
    <property type="type" value="phenotype"/>
</dbReference>
<dbReference type="MIM" id="617926">
    <property type="type" value="phenotype"/>
</dbReference>
<dbReference type="neXtProt" id="NX_Q9ULD6"/>
<dbReference type="OpenTargets" id="ENSG00000164066"/>
<dbReference type="PharmGKB" id="PA162392193"/>
<dbReference type="VEuPathDB" id="HostDB:ENSG00000164066"/>
<dbReference type="eggNOG" id="ENOG502QQJQ">
    <property type="taxonomic scope" value="Eukaryota"/>
</dbReference>
<dbReference type="GeneTree" id="ENSGT00390000001301"/>
<dbReference type="HOGENOM" id="CLU_014223_0_1_1"/>
<dbReference type="InParanoid" id="Q9ULD6"/>
<dbReference type="OMA" id="CAGKSIS"/>
<dbReference type="OrthoDB" id="10038586at2759"/>
<dbReference type="PAN-GO" id="Q9ULD6">
    <property type="GO annotations" value="4 GO annotations based on evolutionary models"/>
</dbReference>
<dbReference type="PhylomeDB" id="Q9ULD6"/>
<dbReference type="TreeFam" id="TF323932"/>
<dbReference type="PathwayCommons" id="Q9ULD6"/>
<dbReference type="Reactome" id="R-HSA-5610787">
    <property type="pathway name" value="Hedgehog 'off' state"/>
</dbReference>
<dbReference type="SignaLink" id="Q9ULD6"/>
<dbReference type="BioGRID-ORCS" id="27152">
    <property type="hits" value="9 hits in 1159 CRISPR screens"/>
</dbReference>
<dbReference type="ChiTaRS" id="INTU">
    <property type="organism name" value="human"/>
</dbReference>
<dbReference type="GenomeRNAi" id="27152"/>
<dbReference type="Pharos" id="Q9ULD6">
    <property type="development level" value="Tbio"/>
</dbReference>
<dbReference type="PRO" id="PR:Q9ULD6"/>
<dbReference type="Proteomes" id="UP000005640">
    <property type="component" value="Chromosome 4"/>
</dbReference>
<dbReference type="RNAct" id="Q9ULD6">
    <property type="molecule type" value="protein"/>
</dbReference>
<dbReference type="Bgee" id="ENSG00000164066">
    <property type="expression patterns" value="Expressed in right uterine tube and 161 other cell types or tissues"/>
</dbReference>
<dbReference type="ExpressionAtlas" id="Q9ULD6">
    <property type="expression patterns" value="baseline and differential"/>
</dbReference>
<dbReference type="GO" id="GO:0009986">
    <property type="term" value="C:cell surface"/>
    <property type="evidence" value="ECO:0007669"/>
    <property type="project" value="UniProtKB-SubCell"/>
</dbReference>
<dbReference type="GO" id="GO:0005814">
    <property type="term" value="C:centriole"/>
    <property type="evidence" value="ECO:0007669"/>
    <property type="project" value="UniProtKB-SubCell"/>
</dbReference>
<dbReference type="GO" id="GO:0036064">
    <property type="term" value="C:ciliary basal body"/>
    <property type="evidence" value="ECO:0000314"/>
    <property type="project" value="HPA"/>
</dbReference>
<dbReference type="GO" id="GO:0035869">
    <property type="term" value="C:ciliary transition zone"/>
    <property type="evidence" value="ECO:0007669"/>
    <property type="project" value="Ensembl"/>
</dbReference>
<dbReference type="GO" id="GO:0005929">
    <property type="term" value="C:cilium"/>
    <property type="evidence" value="ECO:0000318"/>
    <property type="project" value="GO_Central"/>
</dbReference>
<dbReference type="GO" id="GO:0005737">
    <property type="term" value="C:cytoplasm"/>
    <property type="evidence" value="ECO:0000250"/>
    <property type="project" value="UniProtKB"/>
</dbReference>
<dbReference type="GO" id="GO:0005829">
    <property type="term" value="C:cytosol"/>
    <property type="evidence" value="ECO:0000314"/>
    <property type="project" value="HPA"/>
</dbReference>
<dbReference type="GO" id="GO:0043231">
    <property type="term" value="C:intracellular membrane-bounded organelle"/>
    <property type="evidence" value="ECO:0000314"/>
    <property type="project" value="HPA"/>
</dbReference>
<dbReference type="GO" id="GO:0031514">
    <property type="term" value="C:motile cilium"/>
    <property type="evidence" value="ECO:0000314"/>
    <property type="project" value="UniProtKB"/>
</dbReference>
<dbReference type="GO" id="GO:0035091">
    <property type="term" value="F:phosphatidylinositol binding"/>
    <property type="evidence" value="ECO:0000250"/>
    <property type="project" value="UniProtKB"/>
</dbReference>
<dbReference type="GO" id="GO:0051301">
    <property type="term" value="P:cell division"/>
    <property type="evidence" value="ECO:0007669"/>
    <property type="project" value="Ensembl"/>
</dbReference>
<dbReference type="GO" id="GO:0060271">
    <property type="term" value="P:cilium assembly"/>
    <property type="evidence" value="ECO:0000250"/>
    <property type="project" value="UniProtKB"/>
</dbReference>
<dbReference type="GO" id="GO:0042733">
    <property type="term" value="P:embryonic digit morphogenesis"/>
    <property type="evidence" value="ECO:0000315"/>
    <property type="project" value="GO_Central"/>
</dbReference>
<dbReference type="GO" id="GO:0001736">
    <property type="term" value="P:establishment of planar polarity"/>
    <property type="evidence" value="ECO:0000303"/>
    <property type="project" value="ComplexPortal"/>
</dbReference>
<dbReference type="GO" id="GO:0031069">
    <property type="term" value="P:hair follicle morphogenesis"/>
    <property type="evidence" value="ECO:0007669"/>
    <property type="project" value="Ensembl"/>
</dbReference>
<dbReference type="GO" id="GO:0042073">
    <property type="term" value="P:intraciliary transport"/>
    <property type="evidence" value="ECO:0000303"/>
    <property type="project" value="ComplexPortal"/>
</dbReference>
<dbReference type="GO" id="GO:0030216">
    <property type="term" value="P:keratinocyte differentiation"/>
    <property type="evidence" value="ECO:0007669"/>
    <property type="project" value="Ensembl"/>
</dbReference>
<dbReference type="GO" id="GO:0060173">
    <property type="term" value="P:limb development"/>
    <property type="evidence" value="ECO:0000250"/>
    <property type="project" value="UniProtKB"/>
</dbReference>
<dbReference type="GO" id="GO:0044458">
    <property type="term" value="P:motile cilium assembly"/>
    <property type="evidence" value="ECO:0007669"/>
    <property type="project" value="Ensembl"/>
</dbReference>
<dbReference type="GO" id="GO:0051782">
    <property type="term" value="P:negative regulation of cell division"/>
    <property type="evidence" value="ECO:0007669"/>
    <property type="project" value="Ensembl"/>
</dbReference>
<dbReference type="GO" id="GO:0010839">
    <property type="term" value="P:negative regulation of keratinocyte proliferation"/>
    <property type="evidence" value="ECO:0007669"/>
    <property type="project" value="Ensembl"/>
</dbReference>
<dbReference type="GO" id="GO:0007399">
    <property type="term" value="P:nervous system development"/>
    <property type="evidence" value="ECO:0000250"/>
    <property type="project" value="UniProtKB"/>
</dbReference>
<dbReference type="GO" id="GO:0021915">
    <property type="term" value="P:neural tube development"/>
    <property type="evidence" value="ECO:0000303"/>
    <property type="project" value="ComplexPortal"/>
</dbReference>
<dbReference type="GO" id="GO:1905515">
    <property type="term" value="P:non-motile cilium assembly"/>
    <property type="evidence" value="ECO:0007669"/>
    <property type="project" value="Ensembl"/>
</dbReference>
<dbReference type="GO" id="GO:0045880">
    <property type="term" value="P:positive regulation of smoothened signaling pathway"/>
    <property type="evidence" value="ECO:0007669"/>
    <property type="project" value="Ensembl"/>
</dbReference>
<dbReference type="GO" id="GO:0033365">
    <property type="term" value="P:protein localization to organelle"/>
    <property type="evidence" value="ECO:0007669"/>
    <property type="project" value="Ensembl"/>
</dbReference>
<dbReference type="GO" id="GO:1902017">
    <property type="term" value="P:regulation of cilium assembly"/>
    <property type="evidence" value="ECO:0000303"/>
    <property type="project" value="ComplexPortal"/>
</dbReference>
<dbReference type="GO" id="GO:0030278">
    <property type="term" value="P:regulation of ossification"/>
    <property type="evidence" value="ECO:0007669"/>
    <property type="project" value="Ensembl"/>
</dbReference>
<dbReference type="GO" id="GO:0008589">
    <property type="term" value="P:regulation of smoothened signaling pathway"/>
    <property type="evidence" value="ECO:0000250"/>
    <property type="project" value="UniProtKB"/>
</dbReference>
<dbReference type="GO" id="GO:0060021">
    <property type="term" value="P:roof of mouth development"/>
    <property type="evidence" value="ECO:0000315"/>
    <property type="project" value="GO_Central"/>
</dbReference>
<dbReference type="GO" id="GO:0007224">
    <property type="term" value="P:smoothened signaling pathway"/>
    <property type="evidence" value="ECO:0007669"/>
    <property type="project" value="Ensembl"/>
</dbReference>
<dbReference type="GO" id="GO:0021513">
    <property type="term" value="P:spinal cord dorsal/ventral patterning"/>
    <property type="evidence" value="ECO:0007669"/>
    <property type="project" value="Ensembl"/>
</dbReference>
<dbReference type="GO" id="GO:0043587">
    <property type="term" value="P:tongue morphogenesis"/>
    <property type="evidence" value="ECO:0000315"/>
    <property type="project" value="GO_Central"/>
</dbReference>
<dbReference type="GO" id="GO:0016192">
    <property type="term" value="P:vesicle-mediated transport"/>
    <property type="evidence" value="ECO:0007669"/>
    <property type="project" value="InterPro"/>
</dbReference>
<dbReference type="FunFam" id="2.30.42.10:FF:000196">
    <property type="entry name" value="Inturned planar cell polarity protein"/>
    <property type="match status" value="1"/>
</dbReference>
<dbReference type="Gene3D" id="2.30.42.10">
    <property type="match status" value="1"/>
</dbReference>
<dbReference type="InterPro" id="IPR043987">
    <property type="entry name" value="CCZ1/INTU/HSP4_longin_1"/>
</dbReference>
<dbReference type="InterPro" id="IPR043989">
    <property type="entry name" value="CCZ1/INTU/HSP4_longin_3"/>
</dbReference>
<dbReference type="InterPro" id="IPR043988">
    <property type="entry name" value="CCZ1/INTU_longin_2"/>
</dbReference>
<dbReference type="InterPro" id="IPR039151">
    <property type="entry name" value="INTU"/>
</dbReference>
<dbReference type="InterPro" id="IPR001478">
    <property type="entry name" value="PDZ"/>
</dbReference>
<dbReference type="InterPro" id="IPR036034">
    <property type="entry name" value="PDZ_sf"/>
</dbReference>
<dbReference type="PANTHER" id="PTHR21082">
    <property type="entry name" value="PROTEIN INTURNED"/>
    <property type="match status" value="1"/>
</dbReference>
<dbReference type="PANTHER" id="PTHR21082:SF4">
    <property type="entry name" value="PROTEIN INTURNED"/>
    <property type="match status" value="1"/>
</dbReference>
<dbReference type="Pfam" id="PF19031">
    <property type="entry name" value="Intu_longin_1"/>
    <property type="match status" value="1"/>
</dbReference>
<dbReference type="Pfam" id="PF19032">
    <property type="entry name" value="Intu_longin_2"/>
    <property type="match status" value="1"/>
</dbReference>
<dbReference type="Pfam" id="PF19033">
    <property type="entry name" value="Intu_longin_3"/>
    <property type="match status" value="1"/>
</dbReference>
<dbReference type="SMART" id="SM00228">
    <property type="entry name" value="PDZ"/>
    <property type="match status" value="1"/>
</dbReference>
<dbReference type="SUPFAM" id="SSF50156">
    <property type="entry name" value="PDZ domain-like"/>
    <property type="match status" value="1"/>
</dbReference>
<dbReference type="PROSITE" id="PS50106">
    <property type="entry name" value="PDZ"/>
    <property type="match status" value="1"/>
</dbReference>
<name>INTU_HUMAN</name>
<protein>
    <recommendedName>
        <fullName>Protein inturned</fullName>
    </recommendedName>
    <alternativeName>
        <fullName>Inturned planar cell polarity effector homolog</fullName>
    </alternativeName>
    <alternativeName>
        <fullName>PDZ domain-containing protein 6</fullName>
    </alternativeName>
</protein>
<gene>
    <name type="primary">INTU</name>
    <name type="synonym">KIAA1284</name>
    <name type="synonym">PDZD6</name>
    <name type="synonym">PDZK6</name>
</gene>
<comment type="function">
    <text evidence="2 3 11">Plays a key role in ciliogenesis and embryonic development. Regulator of cilia formation by controlling the organization of the apical actin cytoskeleton and the positioning of the basal bodies at the apical cell surface, which in turn is essential for the normal orientation of elongating ciliary microtubules. Plays a key role in definition of cell polarity via its role in ciliogenesis but not via conversion extension. Has an indirect effect on hedgehog signaling (By similarity). Proposed to function as core component of the CPLANE (ciliogenesis and planar polarity effectors) complex involved in the recruitment of peripheral IFT-A proteins to basal bodies (PubMed:27158779). Required for recruitment of CPLANE2 to the mother centriole (By similarity). Binds phosphatidylinositol 3-phosphate with highest affinity, followed by phosphatidylinositol 4-phosphate and phosphatidylinositol 5-phosphate (By similarity).</text>
</comment>
<comment type="subunit">
    <text evidence="2 6 8">Component of the CPLANE (ciliogenesis and planar polarity effectors) complex, composed of INTU, FUZ and WDPCP (PubMed:35427153). Interacts with CPLANE1 (By similarity). Interacts with NPHP4 and DAAM1; INTU is mediating the interaction between NPHP4 and DAAM1 (PubMed:26644512).</text>
</comment>
<comment type="interaction">
    <interactant intactId="EBI-11762696">
        <id>Q9ULD6</id>
    </interactant>
    <interactant intactId="EBI-2817289">
        <id>Q9Y4D1</id>
        <label>DAAM1</label>
    </interactant>
    <organismsDiffer>false</organismsDiffer>
    <experiments>3</experiments>
</comment>
<comment type="interaction">
    <interactant intactId="EBI-11762696">
        <id>Q9ULD6</id>
    </interactant>
    <interactant intactId="EBI-750341">
        <id>Q9BT04</id>
        <label>FUZ</label>
    </interactant>
    <organismsDiffer>false</organismsDiffer>
    <experiments>3</experiments>
</comment>
<comment type="interaction">
    <interactant intactId="EBI-11762696">
        <id>Q9ULD6</id>
    </interactant>
    <interactant intactId="EBI-4281852">
        <id>O75161</id>
        <label>NPHP4</label>
    </interactant>
    <organismsDiffer>false</organismsDiffer>
    <experiments>2</experiments>
</comment>
<comment type="subcellular location">
    <subcellularLocation>
        <location evidence="2">Cytoplasm</location>
    </subcellularLocation>
    <subcellularLocation>
        <location evidence="3">Cell surface</location>
    </subcellularLocation>
    <subcellularLocation>
        <location evidence="6">Cytoplasm</location>
        <location evidence="6">Cytoskeleton</location>
        <location evidence="6">Cilium basal body</location>
    </subcellularLocation>
    <subcellularLocation>
        <location evidence="2">Cytoplasm</location>
        <location evidence="2">Cytoskeleton</location>
        <location evidence="2">Microtubule organizing center</location>
        <location evidence="2">Centrosome</location>
        <location evidence="2">Centriole</location>
    </subcellularLocation>
    <text evidence="2 3">Enriched at the apical surface in ciliated cells. Localizes at the transition zone, a region between the basal body and the ciliary axoneme. Recruited to the centriole in a TTBK2-dependent manner.</text>
</comment>
<comment type="alternative products">
    <event type="alternative splicing"/>
    <isoform>
        <id>Q9ULD6-1</id>
        <name>1</name>
        <sequence type="displayed"/>
    </isoform>
    <isoform>
        <id>Q9ULD6-2</id>
        <name>2</name>
        <sequence type="described" ref="VSP_015073 VSP_015074"/>
    </isoform>
    <isoform>
        <id>Q9ULD6-3</id>
        <name>3</name>
        <sequence type="described" ref="VSP_042586 VSP_042587"/>
    </isoform>
    <isoform>
        <id>Q9ULD6-4</id>
        <name>4</name>
        <sequence type="described" ref="VSP_042585"/>
    </isoform>
</comment>
<comment type="disease" evidence="7 8">
    <disease id="DI-05203">
        <name>Short-rib thoracic dysplasia 20 with polydactyly</name>
        <acronym>SRTD20</acronym>
        <description>A form of short-rib thoracic dysplasia, a group of autosomal recessive ciliopathies that are characterized by a constricted thoracic cage, short ribs, shortened tubular bones, and a 'trident' appearance of the acetabular roof. Polydactyly is variably present. Non-skeletal involvement can include cleft lip/palate as well as anomalies of major organs such as the brain, eye, heart, kidneys, liver, pancreas, intestines, and genitalia. Some forms of the disease are lethal in the neonatal period due to respiratory insufficiency secondary to a severely restricted thoracic cage, whereas others are compatible with life. Disease spectrum encompasses Ellis-van Creveld syndrome, asphyxiating thoracic dystrophy (Jeune syndrome), Mainzer-Saldino syndrome, and short rib-polydactyly syndrome.</description>
        <dbReference type="MIM" id="617925"/>
    </disease>
    <text>The disease is caused by variants affecting the gene represented in this entry.</text>
</comment>
<comment type="disease" evidence="7">
    <disease id="DI-05202">
        <name>Orofaciodigital syndrome 17</name>
        <acronym>OFD17</acronym>
        <description>A form of orofaciodigital syndrome, a group of heterogeneous disorders characterized by malformations of the oral cavity, face and digits, and associated phenotypic abnormalities that lead to the delineation of various subtypes. OFD17 inheritance is autosomal recessive.</description>
        <dbReference type="MIM" id="617926"/>
    </disease>
    <text>The disease is caused by variants affecting the gene represented in this entry.</text>
</comment>
<comment type="disease">
    <disease id="DI-05258">
        <name>Short-rib thoracic dysplasia 7/20 with polydactyly, digenic</name>
        <acronym>SRTD7/20</acronym>
        <description>A digenic form of short-rib thoracic dysplasia caused by double heterozygosity for a mutation in the WDR35 gene and a mutation in the INTU gene. Short-rib thoracic dysplasia is part of a group of ciliopathies that are characterized by a constricted thoracic cage, short ribs, shortened tubular bones, and a 'trident' appearance of the acetabular roof. Polydactyly is variably present. Non-skeletal involvement can include cleft lip/palate as well as anomalies of major organs such as the brain, eye, heart, kidneys, liver, pancreas, intestines, and genitalia. Some forms of the disease are lethal in the neonatal period due to respiratory insufficiency secondary to a severely restricted thoracic cage, whereas others are compatible with life. Disease spectrum encompasses Ellis-van Creveld syndrome, asphyxiating thoracic dystrophy (Jeune syndrome), Mainzer-Saldino syndrome, and short rib-polydactyly syndrome.</description>
        <dbReference type="MIM" id="614091"/>
    </disease>
    <text evidence="7">The disease is caused by variants affecting distinct genetic loci, including the gene represented in this entry. SRTD7/20 can be caused by co-occurrence of WDR35 variant p.Trp311Leu and INTU p.Gln276Ter. One such patient has been reported.</text>
</comment>
<comment type="miscellaneous">
    <molecule>Isoform 2</molecule>
    <text evidence="10">May be produced at very low levels due to a premature stop codon in the mRNA, leading to nonsense-mediated mRNA decay.</text>
</comment>
<comment type="similarity">
    <text evidence="10">Belongs to the inturned family.</text>
</comment>
<comment type="sequence caution" evidence="10">
    <conflict type="erroneous initiation">
        <sequence resource="EMBL-CDS" id="BAA86598"/>
    </conflict>
    <text>Extended N-terminus.</text>
</comment>
<keyword id="KW-0002">3D-structure</keyword>
<keyword id="KW-0025">Alternative splicing</keyword>
<keyword id="KW-0966">Cell projection</keyword>
<keyword id="KW-1186">Ciliopathy</keyword>
<keyword id="KW-0970">Cilium biogenesis/degradation</keyword>
<keyword id="KW-0963">Cytoplasm</keyword>
<keyword id="KW-0206">Cytoskeleton</keyword>
<keyword id="KW-0217">Developmental protein</keyword>
<keyword id="KW-0225">Disease variant</keyword>
<keyword id="KW-0597">Phosphoprotein</keyword>
<keyword id="KW-1267">Proteomics identification</keyword>
<keyword id="KW-1185">Reference proteome</keyword>
<sequence>MASVASCDSRPSSDELPGDPSSQEEDEDYDFEDRVSDSGSYSSASSDYDDLEPEWLDSVQKNGELFYLELSEDEEESLLPETPTVNHVRFSENEIIIEDDYKERKKYEPKLKQFTKILRRKRLLPKRCNKKNSNDNGPVSILKHQSNQKTGVIVQQRYKDVNVYVNPKKLTVIKAKEQLKLLEVLVGIIHQTKWSWRRTGKQGDGERLVVHGLLPGGSAMKSGQVLIGDVLVAVNDVDVTTENIERVLSCIPGPMQVKLTFENAYDVKRETSHPRQKKTQSNTSDLVKLLWGEEVEGIQQSGLNTPHIIMYLTLQLDSETSKEEQEILYHYPMSEASQKLKSVRGIFLTLCDMLENVTGTQVTSSSLLLNGKQIHVAYWKESDKLLLIGLPAEEVPLPRLRNMIENVIQTLKFMYGSLDSAFCQIENVPRLDHFFNLFFQRALQPAKLHSSASPSAQQYDASSAVLLDNLPGVRWLTLPLEIKMELDMALSDLEAADFAELSEDYYDMRRLYTILGSSLFYKGYLICSHLPKDDLIDIAVYCRHYCLLPLAAKQRIGQLIIWREVFPQHHLRPLADSSTEVFPEPEGRYFLLVVGLKHYMLCVLLEAGGCASKAIGSPGPDCVYVDQVKTTLHQLDGVDSRIDERLASSPVPCLSCADWFLTGSREKTDSLTTSPILSRLQGTSKVATSPTCRRTLFGDYSLKTRKPSPSCSSGGSDNGCEGGEDDGFSPHTTPDAVRKQRESQGSDGLEESGTLLKVTKKKSTLPNPFHLGNLKKDLPEKELEIYNTVKLTSGPENTLFHYVALETVQGIFITPTLEEVAQLSGSIHPQLIKNFHQCCLSIRAVFQQTLVEEKKKGLNSGDHSDSAKSVSSLNPVKEHGVLFECSPGNWTDQKKAPPVMAYWVVGRLFLHPKPQELYVCFHDSVTEIAIEIAFKLFFGLTL</sequence>
<organism>
    <name type="scientific">Homo sapiens</name>
    <name type="common">Human</name>
    <dbReference type="NCBI Taxonomy" id="9606"/>
    <lineage>
        <taxon>Eukaryota</taxon>
        <taxon>Metazoa</taxon>
        <taxon>Chordata</taxon>
        <taxon>Craniata</taxon>
        <taxon>Vertebrata</taxon>
        <taxon>Euteleostomi</taxon>
        <taxon>Mammalia</taxon>
        <taxon>Eutheria</taxon>
        <taxon>Euarchontoglires</taxon>
        <taxon>Primates</taxon>
        <taxon>Haplorrhini</taxon>
        <taxon>Catarrhini</taxon>
        <taxon>Hominidae</taxon>
        <taxon>Homo</taxon>
    </lineage>
</organism>
<proteinExistence type="evidence at protein level"/>
<feature type="chain" id="PRO_0000058296" description="Protein inturned">
    <location>
        <begin position="1"/>
        <end position="942"/>
    </location>
</feature>
<feature type="domain" description="PDZ" evidence="4">
    <location>
        <begin position="185"/>
        <end position="263"/>
    </location>
</feature>
<feature type="region of interest" description="Disordered" evidence="5">
    <location>
        <begin position="1"/>
        <end position="52"/>
    </location>
</feature>
<feature type="region of interest" description="Disordered" evidence="5">
    <location>
        <begin position="704"/>
        <end position="754"/>
    </location>
</feature>
<feature type="compositionally biased region" description="Acidic residues" evidence="5">
    <location>
        <begin position="22"/>
        <end position="31"/>
    </location>
</feature>
<feature type="compositionally biased region" description="Low complexity" evidence="5">
    <location>
        <begin position="37"/>
        <end position="46"/>
    </location>
</feature>
<feature type="modified residue" description="Phosphoserine" evidence="1">
    <location>
        <position position="670"/>
    </location>
</feature>
<feature type="modified residue" description="Phosphoserine" evidence="13">
    <location>
        <position position="674"/>
    </location>
</feature>
<feature type="splice variant" id="VSP_042585" description="In isoform 4." evidence="10">
    <original>MASVASCDSRPSSDELPGDPSSQEEDEDYDFEDRVSDSGSYSSASSDYD</original>
    <variation>MFQVGRSSIPKPAPRSLEDLDSVQRVLLHS</variation>
    <location>
        <begin position="1"/>
        <end position="49"/>
    </location>
</feature>
<feature type="splice variant" id="VSP_015073" description="In isoform 2." evidence="9">
    <original>VPLPRLRNMIENVI</original>
    <variation>IELPSSAHTHGERN</variation>
    <location>
        <begin position="395"/>
        <end position="408"/>
    </location>
</feature>
<feature type="splice variant" id="VSP_015074" description="In isoform 2." evidence="9">
    <location>
        <begin position="409"/>
        <end position="942"/>
    </location>
</feature>
<feature type="splice variant" id="VSP_042586" description="In isoform 3." evidence="10">
    <original>AFCQIENVPRLDHFF</original>
    <variation>IMKEFSVIVSSGKII</variation>
    <location>
        <begin position="421"/>
        <end position="435"/>
    </location>
</feature>
<feature type="splice variant" id="VSP_042587" description="In isoform 3." evidence="10">
    <location>
        <begin position="436"/>
        <end position="942"/>
    </location>
</feature>
<feature type="sequence variant" id="VAR_080710" description="In SRTD7/20; in an SRTD7/20 patient who also carries variant WDR35 L-311." evidence="7">
    <location>
        <begin position="276"/>
        <end position="942"/>
    </location>
</feature>
<feature type="sequence variant" id="VAR_080711" description="In SRTD20; loss of subcellular location to cilium basal body, when tested in a heterologous system." evidence="7">
    <location>
        <begin position="355"/>
        <end position="942"/>
    </location>
</feature>
<feature type="sequence variant" id="VAR_076782" description="No effect on the assembly of the CPLANE complex; dbSNP:rs150681845." evidence="7 8">
    <original>A</original>
    <variation>T</variation>
    <location>
        <position position="452"/>
    </location>
</feature>
<feature type="sequence variant" id="VAR_076783" description="In SRTD20; uncertain significance; impairs recruitment of IFT43 to the basal body, but no effect on subcellular location, when tested in a heterologous system; no effect on the assembly of the CPLANE complex; dbSNP:rs1360128571." evidence="7 8">
    <original>E</original>
    <variation>A</variation>
    <location>
        <position position="500"/>
    </location>
</feature>
<feature type="strand" evidence="14">
    <location>
        <begin position="308"/>
        <end position="313"/>
    </location>
</feature>
<feature type="strand" evidence="14">
    <location>
        <begin position="320"/>
        <end position="322"/>
    </location>
</feature>
<feature type="turn" evidence="14">
    <location>
        <begin position="323"/>
        <end position="326"/>
    </location>
</feature>
<feature type="strand" evidence="14">
    <location>
        <begin position="327"/>
        <end position="331"/>
    </location>
</feature>
<feature type="helix" evidence="14">
    <location>
        <begin position="335"/>
        <end position="342"/>
    </location>
</feature>
<feature type="helix" evidence="14">
    <location>
        <begin position="344"/>
        <end position="357"/>
    </location>
</feature>
<feature type="strand" evidence="14">
    <location>
        <begin position="358"/>
        <end position="360"/>
    </location>
</feature>
<feature type="strand" evidence="14">
    <location>
        <begin position="362"/>
        <end position="369"/>
    </location>
</feature>
<feature type="strand" evidence="14">
    <location>
        <begin position="372"/>
        <end position="391"/>
    </location>
</feature>
<feature type="turn" evidence="14">
    <location>
        <begin position="392"/>
        <end position="394"/>
    </location>
</feature>
<feature type="helix" evidence="14">
    <location>
        <begin position="397"/>
        <end position="415"/>
    </location>
</feature>
<feature type="helix" evidence="14">
    <location>
        <begin position="418"/>
        <end position="423"/>
    </location>
</feature>
<feature type="helix" evidence="14">
    <location>
        <begin position="425"/>
        <end position="427"/>
    </location>
</feature>
<feature type="helix" evidence="14">
    <location>
        <begin position="428"/>
        <end position="441"/>
    </location>
</feature>
<feature type="helix" evidence="14">
    <location>
        <begin position="445"/>
        <end position="447"/>
    </location>
</feature>
<feature type="helix" evidence="14">
    <location>
        <begin position="459"/>
        <end position="467"/>
    </location>
</feature>
<feature type="strand" evidence="14">
    <location>
        <begin position="470"/>
        <end position="472"/>
    </location>
</feature>
<feature type="helix" evidence="14">
    <location>
        <begin position="480"/>
        <end position="494"/>
    </location>
</feature>
<feature type="strand" evidence="14">
    <location>
        <begin position="513"/>
        <end position="521"/>
    </location>
</feature>
<feature type="strand" evidence="14">
    <location>
        <begin position="524"/>
        <end position="530"/>
    </location>
</feature>
<feature type="helix" evidence="14">
    <location>
        <begin position="532"/>
        <end position="544"/>
    </location>
</feature>
<feature type="helix" evidence="14">
    <location>
        <begin position="547"/>
        <end position="553"/>
    </location>
</feature>
<feature type="strand" evidence="14">
    <location>
        <begin position="559"/>
        <end position="565"/>
    </location>
</feature>
<feature type="strand" evidence="14">
    <location>
        <begin position="587"/>
        <end position="596"/>
    </location>
</feature>
<feature type="strand" evidence="14">
    <location>
        <begin position="599"/>
        <end position="608"/>
    </location>
</feature>
<feature type="helix" evidence="14">
    <location>
        <begin position="623"/>
        <end position="635"/>
    </location>
</feature>
<feature type="helix" evidence="14">
    <location>
        <begin position="639"/>
        <end position="647"/>
    </location>
</feature>
<feature type="strand" evidence="14">
    <location>
        <begin position="799"/>
        <end position="806"/>
    </location>
</feature>
<feature type="turn" evidence="14">
    <location>
        <begin position="807"/>
        <end position="810"/>
    </location>
</feature>
<feature type="strand" evidence="14">
    <location>
        <begin position="811"/>
        <end position="813"/>
    </location>
</feature>
<feature type="helix" evidence="14">
    <location>
        <begin position="817"/>
        <end position="821"/>
    </location>
</feature>
<feature type="helix" evidence="14">
    <location>
        <begin position="828"/>
        <end position="859"/>
    </location>
</feature>
<feature type="strand" evidence="14">
    <location>
        <begin position="878"/>
        <end position="883"/>
    </location>
</feature>
<feature type="strand" evidence="14">
    <location>
        <begin position="903"/>
        <end position="909"/>
    </location>
</feature>
<feature type="strand" evidence="14">
    <location>
        <begin position="915"/>
        <end position="921"/>
    </location>
</feature>
<feature type="helix" evidence="14">
    <location>
        <begin position="929"/>
        <end position="937"/>
    </location>
</feature>